<evidence type="ECO:0000255" key="1">
    <source>
        <dbReference type="HAMAP-Rule" id="MF_01142"/>
    </source>
</evidence>
<name>LRGB_STAA9</name>
<accession>A5IPD2</accession>
<proteinExistence type="inferred from homology"/>
<dbReference type="EMBL" id="CP000703">
    <property type="protein sequence ID" value="ABQ48055.1"/>
    <property type="molecule type" value="Genomic_DNA"/>
</dbReference>
<dbReference type="RefSeq" id="WP_000607067.1">
    <property type="nucleotide sequence ID" value="NC_009487.1"/>
</dbReference>
<dbReference type="KEGG" id="saj:SaurJH9_0248"/>
<dbReference type="HOGENOM" id="CLU_082099_1_0_9"/>
<dbReference type="GO" id="GO:0005886">
    <property type="term" value="C:plasma membrane"/>
    <property type="evidence" value="ECO:0007669"/>
    <property type="project" value="UniProtKB-SubCell"/>
</dbReference>
<dbReference type="GO" id="GO:0019835">
    <property type="term" value="P:cytolysis"/>
    <property type="evidence" value="ECO:0007669"/>
    <property type="project" value="UniProtKB-UniRule"/>
</dbReference>
<dbReference type="GO" id="GO:0031640">
    <property type="term" value="P:killing of cells of another organism"/>
    <property type="evidence" value="ECO:0007669"/>
    <property type="project" value="UniProtKB-KW"/>
</dbReference>
<dbReference type="GO" id="GO:0012501">
    <property type="term" value="P:programmed cell death"/>
    <property type="evidence" value="ECO:0007669"/>
    <property type="project" value="UniProtKB-UniRule"/>
</dbReference>
<dbReference type="HAMAP" id="MF_01142">
    <property type="entry name" value="LrgB"/>
    <property type="match status" value="1"/>
</dbReference>
<dbReference type="InterPro" id="IPR024891">
    <property type="entry name" value="Antiholin-like_LrgB"/>
</dbReference>
<dbReference type="InterPro" id="IPR007300">
    <property type="entry name" value="CidB/LrgB"/>
</dbReference>
<dbReference type="NCBIfam" id="NF003291">
    <property type="entry name" value="PRK04288.1"/>
    <property type="match status" value="1"/>
</dbReference>
<dbReference type="PANTHER" id="PTHR30249:SF0">
    <property type="entry name" value="PLASTIDAL GLYCOLATE_GLYCERATE TRANSLOCATOR 1, CHLOROPLASTIC"/>
    <property type="match status" value="1"/>
</dbReference>
<dbReference type="PANTHER" id="PTHR30249">
    <property type="entry name" value="PUTATIVE SEROTONIN TRANSPORTER"/>
    <property type="match status" value="1"/>
</dbReference>
<dbReference type="Pfam" id="PF04172">
    <property type="entry name" value="LrgB"/>
    <property type="match status" value="1"/>
</dbReference>
<comment type="function">
    <text evidence="1">Inhibits the expression or activity of extracellular murein hydrolases by interacting, possibly with LrgA, with the holin-like proteins CidA and/or CidB. The LrgAB and CidAB proteins may affect the proton motive force of the membrane. May be involved in programmed cell death (PCD), possibly triggering PCD in response to antibiotics and environmental stresses.</text>
</comment>
<comment type="subcellular location">
    <subcellularLocation>
        <location evidence="1">Cell membrane</location>
        <topology evidence="1">Multi-pass membrane protein</topology>
    </subcellularLocation>
</comment>
<comment type="similarity">
    <text evidence="1">Belongs to the CidB/LrgB family. LrgB subfamily.</text>
</comment>
<reference key="1">
    <citation type="submission" date="2007-05" db="EMBL/GenBank/DDBJ databases">
        <title>Complete sequence of chromosome of Staphylococcus aureus subsp. aureus JH9.</title>
        <authorList>
            <consortium name="US DOE Joint Genome Institute"/>
            <person name="Copeland A."/>
            <person name="Lucas S."/>
            <person name="Lapidus A."/>
            <person name="Barry K."/>
            <person name="Detter J.C."/>
            <person name="Glavina del Rio T."/>
            <person name="Hammon N."/>
            <person name="Israni S."/>
            <person name="Pitluck S."/>
            <person name="Chain P."/>
            <person name="Malfatti S."/>
            <person name="Shin M."/>
            <person name="Vergez L."/>
            <person name="Schmutz J."/>
            <person name="Larimer F."/>
            <person name="Land M."/>
            <person name="Hauser L."/>
            <person name="Kyrpides N."/>
            <person name="Kim E."/>
            <person name="Tomasz A."/>
            <person name="Richardson P."/>
        </authorList>
    </citation>
    <scope>NUCLEOTIDE SEQUENCE [LARGE SCALE GENOMIC DNA]</scope>
    <source>
        <strain>JH9</strain>
    </source>
</reference>
<organism>
    <name type="scientific">Staphylococcus aureus (strain JH9)</name>
    <dbReference type="NCBI Taxonomy" id="359786"/>
    <lineage>
        <taxon>Bacteria</taxon>
        <taxon>Bacillati</taxon>
        <taxon>Bacillota</taxon>
        <taxon>Bacilli</taxon>
        <taxon>Bacillales</taxon>
        <taxon>Staphylococcaceae</taxon>
        <taxon>Staphylococcus</taxon>
    </lineage>
</organism>
<sequence length="233" mass="25097">MINHLALNTPYFGILLSVIPFFLATILFEKTNRFFLFAPLFVSMVFGVAFLYLTGIPYKTYKIGGDIIYFFLEPATICFAIPLYKKREVLVKHWHRIIGGIGIGTVVALLIILTFAKLAQFANDVILSMLPQAATTAIALPVSAGIGGIKELTSLAVILNGVIIYALGNKFLKLFRITNPIARGLALGTSGHTLGVAPAKELGPVEESMASIALVLVGVVVVAVVPVFVAIFF</sequence>
<gene>
    <name evidence="1" type="primary">lrgB</name>
    <name type="ordered locus">SaurJH9_0248</name>
</gene>
<keyword id="KW-1003">Cell membrane</keyword>
<keyword id="KW-0204">Cytolysis</keyword>
<keyword id="KW-0472">Membrane</keyword>
<keyword id="KW-0812">Transmembrane</keyword>
<keyword id="KW-1133">Transmembrane helix</keyword>
<feature type="chain" id="PRO_1000085034" description="Antiholin-like protein LrgB">
    <location>
        <begin position="1"/>
        <end position="233"/>
    </location>
</feature>
<feature type="transmembrane region" description="Helical" evidence="1">
    <location>
        <begin position="9"/>
        <end position="29"/>
    </location>
</feature>
<feature type="transmembrane region" description="Helical" evidence="1">
    <location>
        <begin position="34"/>
        <end position="54"/>
    </location>
</feature>
<feature type="transmembrane region" description="Helical" evidence="1">
    <location>
        <begin position="63"/>
        <end position="83"/>
    </location>
</feature>
<feature type="transmembrane region" description="Helical" evidence="1">
    <location>
        <begin position="97"/>
        <end position="117"/>
    </location>
</feature>
<feature type="transmembrane region" description="Helical" evidence="1">
    <location>
        <begin position="121"/>
        <end position="141"/>
    </location>
</feature>
<feature type="transmembrane region" description="Helical" evidence="1">
    <location>
        <begin position="144"/>
        <end position="164"/>
    </location>
</feature>
<feature type="transmembrane region" description="Helical" evidence="1">
    <location>
        <begin position="212"/>
        <end position="232"/>
    </location>
</feature>
<protein>
    <recommendedName>
        <fullName evidence="1">Antiholin-like protein LrgB</fullName>
    </recommendedName>
</protein>